<organism>
    <name type="scientific">Shigella flexneri</name>
    <dbReference type="NCBI Taxonomy" id="623"/>
    <lineage>
        <taxon>Bacteria</taxon>
        <taxon>Pseudomonadati</taxon>
        <taxon>Pseudomonadota</taxon>
        <taxon>Gammaproteobacteria</taxon>
        <taxon>Enterobacterales</taxon>
        <taxon>Enterobacteriaceae</taxon>
        <taxon>Shigella</taxon>
    </lineage>
</organism>
<evidence type="ECO:0000255" key="1">
    <source>
        <dbReference type="HAMAP-Rule" id="MF_01363"/>
    </source>
</evidence>
<evidence type="ECO:0000305" key="2"/>
<accession>P0AG50</accession>
<accession>P02422</accession>
<reference key="1">
    <citation type="journal article" date="2002" name="Nucleic Acids Res.">
        <title>Genome sequence of Shigella flexneri 2a: insights into pathogenicity through comparison with genomes of Escherichia coli K12 and O157.</title>
        <authorList>
            <person name="Jin Q."/>
            <person name="Yuan Z."/>
            <person name="Xu J."/>
            <person name="Wang Y."/>
            <person name="Shen Y."/>
            <person name="Lu W."/>
            <person name="Wang J."/>
            <person name="Liu H."/>
            <person name="Yang J."/>
            <person name="Yang F."/>
            <person name="Zhang X."/>
            <person name="Zhang J."/>
            <person name="Yang G."/>
            <person name="Wu H."/>
            <person name="Qu D."/>
            <person name="Dong J."/>
            <person name="Sun L."/>
            <person name="Xue Y."/>
            <person name="Zhao A."/>
            <person name="Gao Y."/>
            <person name="Zhu J."/>
            <person name="Kan B."/>
            <person name="Ding K."/>
            <person name="Chen S."/>
            <person name="Cheng H."/>
            <person name="Yao Z."/>
            <person name="He B."/>
            <person name="Chen R."/>
            <person name="Ma D."/>
            <person name="Qiang B."/>
            <person name="Wen Y."/>
            <person name="Hou Y."/>
            <person name="Yu J."/>
        </authorList>
    </citation>
    <scope>NUCLEOTIDE SEQUENCE [LARGE SCALE GENOMIC DNA]</scope>
    <source>
        <strain>301 / Serotype 2a</strain>
    </source>
</reference>
<reference key="2">
    <citation type="journal article" date="2003" name="Infect. Immun.">
        <title>Complete genome sequence and comparative genomics of Shigella flexneri serotype 2a strain 2457T.</title>
        <authorList>
            <person name="Wei J."/>
            <person name="Goldberg M.B."/>
            <person name="Burland V."/>
            <person name="Venkatesan M.M."/>
            <person name="Deng W."/>
            <person name="Fournier G."/>
            <person name="Mayhew G.F."/>
            <person name="Plunkett G. III"/>
            <person name="Rose D.J."/>
            <person name="Darling A."/>
            <person name="Mau B."/>
            <person name="Perna N.T."/>
            <person name="Payne S.M."/>
            <person name="Runyen-Janecky L.J."/>
            <person name="Zhou S."/>
            <person name="Schwartz D.C."/>
            <person name="Blattner F.R."/>
        </authorList>
    </citation>
    <scope>NUCLEOTIDE SEQUENCE [LARGE SCALE GENOMIC DNA]</scope>
    <source>
        <strain>ATCC 700930 / 2457T / Serotype 2a</strain>
    </source>
</reference>
<protein>
    <recommendedName>
        <fullName evidence="1">Large ribosomal subunit protein bL21</fullName>
    </recommendedName>
    <alternativeName>
        <fullName evidence="2">50S ribosomal protein L21</fullName>
    </alternativeName>
</protein>
<gene>
    <name evidence="1" type="primary">rplU</name>
    <name type="ordered locus">SF3226</name>
    <name type="ordered locus">S3444</name>
</gene>
<feature type="chain" id="PRO_0000181012" description="Large ribosomal subunit protein bL21">
    <location>
        <begin position="1"/>
        <end position="103"/>
    </location>
</feature>
<name>RL21_SHIFL</name>
<proteinExistence type="inferred from homology"/>
<sequence length="103" mass="11564">MYAVFQSGGKQHRVSEGQTVRLEKLDIATGETVEFAEVLMIANGEEVKIGVPFVDGGVIKAEVVAHGRGEKVKIVKFRRRKHYRKQQGHRQWFTDVKITGISA</sequence>
<keyword id="KW-1185">Reference proteome</keyword>
<keyword id="KW-0687">Ribonucleoprotein</keyword>
<keyword id="KW-0689">Ribosomal protein</keyword>
<keyword id="KW-0694">RNA-binding</keyword>
<keyword id="KW-0699">rRNA-binding</keyword>
<dbReference type="EMBL" id="AE005674">
    <property type="protein sequence ID" value="AAN44692.1"/>
    <property type="molecule type" value="Genomic_DNA"/>
</dbReference>
<dbReference type="EMBL" id="AE014073">
    <property type="protein sequence ID" value="AAP18506.1"/>
    <property type="molecule type" value="Genomic_DNA"/>
</dbReference>
<dbReference type="RefSeq" id="NP_708985.1">
    <property type="nucleotide sequence ID" value="NC_004337.2"/>
</dbReference>
<dbReference type="RefSeq" id="WP_000271401.1">
    <property type="nucleotide sequence ID" value="NZ_WPGW01000004.1"/>
</dbReference>
<dbReference type="SMR" id="P0AG50"/>
<dbReference type="STRING" id="198214.SF3226"/>
<dbReference type="PaxDb" id="198214-SF3226"/>
<dbReference type="GeneID" id="1027114"/>
<dbReference type="GeneID" id="93778795"/>
<dbReference type="KEGG" id="sfl:SF3226"/>
<dbReference type="KEGG" id="sfx:S3444"/>
<dbReference type="PATRIC" id="fig|198214.7.peg.3827"/>
<dbReference type="HOGENOM" id="CLU_061463_3_3_6"/>
<dbReference type="Proteomes" id="UP000001006">
    <property type="component" value="Chromosome"/>
</dbReference>
<dbReference type="Proteomes" id="UP000002673">
    <property type="component" value="Chromosome"/>
</dbReference>
<dbReference type="GO" id="GO:0005737">
    <property type="term" value="C:cytoplasm"/>
    <property type="evidence" value="ECO:0007669"/>
    <property type="project" value="UniProtKB-ARBA"/>
</dbReference>
<dbReference type="GO" id="GO:1990904">
    <property type="term" value="C:ribonucleoprotein complex"/>
    <property type="evidence" value="ECO:0007669"/>
    <property type="project" value="UniProtKB-KW"/>
</dbReference>
<dbReference type="GO" id="GO:0005840">
    <property type="term" value="C:ribosome"/>
    <property type="evidence" value="ECO:0007669"/>
    <property type="project" value="UniProtKB-KW"/>
</dbReference>
<dbReference type="GO" id="GO:0019843">
    <property type="term" value="F:rRNA binding"/>
    <property type="evidence" value="ECO:0007669"/>
    <property type="project" value="UniProtKB-UniRule"/>
</dbReference>
<dbReference type="GO" id="GO:0003735">
    <property type="term" value="F:structural constituent of ribosome"/>
    <property type="evidence" value="ECO:0007669"/>
    <property type="project" value="InterPro"/>
</dbReference>
<dbReference type="GO" id="GO:0006412">
    <property type="term" value="P:translation"/>
    <property type="evidence" value="ECO:0007669"/>
    <property type="project" value="UniProtKB-UniRule"/>
</dbReference>
<dbReference type="HAMAP" id="MF_01363">
    <property type="entry name" value="Ribosomal_bL21"/>
    <property type="match status" value="1"/>
</dbReference>
<dbReference type="InterPro" id="IPR028909">
    <property type="entry name" value="bL21-like"/>
</dbReference>
<dbReference type="InterPro" id="IPR036164">
    <property type="entry name" value="bL21-like_sf"/>
</dbReference>
<dbReference type="InterPro" id="IPR001787">
    <property type="entry name" value="Ribosomal_bL21"/>
</dbReference>
<dbReference type="InterPro" id="IPR018258">
    <property type="entry name" value="Ribosomal_bL21_CS"/>
</dbReference>
<dbReference type="NCBIfam" id="TIGR00061">
    <property type="entry name" value="L21"/>
    <property type="match status" value="1"/>
</dbReference>
<dbReference type="PANTHER" id="PTHR21349">
    <property type="entry name" value="50S RIBOSOMAL PROTEIN L21"/>
    <property type="match status" value="1"/>
</dbReference>
<dbReference type="PANTHER" id="PTHR21349:SF0">
    <property type="entry name" value="LARGE RIBOSOMAL SUBUNIT PROTEIN BL21M"/>
    <property type="match status" value="1"/>
</dbReference>
<dbReference type="Pfam" id="PF00829">
    <property type="entry name" value="Ribosomal_L21p"/>
    <property type="match status" value="1"/>
</dbReference>
<dbReference type="SUPFAM" id="SSF141091">
    <property type="entry name" value="L21p-like"/>
    <property type="match status" value="1"/>
</dbReference>
<dbReference type="PROSITE" id="PS01169">
    <property type="entry name" value="RIBOSOMAL_L21"/>
    <property type="match status" value="1"/>
</dbReference>
<comment type="function">
    <text evidence="1">This protein binds to 23S rRNA in the presence of protein L20.</text>
</comment>
<comment type="subunit">
    <text evidence="1">Part of the 50S ribosomal subunit. Contacts protein L20.</text>
</comment>
<comment type="similarity">
    <text evidence="1">Belongs to the bacterial ribosomal protein bL21 family.</text>
</comment>